<gene>
    <name evidence="1" type="primary">rplC</name>
    <name type="ordered locus">Ppro_0680</name>
</gene>
<sequence>MKKGIIGKKIGMTQIFTEDGTRVPVTVIQAGPCVVTQKKTASIDGYSAVQVGFDSTPAANASKPMLGHCTKSGQGVFRYLREFKFDAASEMNLGDVLTVEQFTAGDFVDVTGTSIGKGFQGVIKRYNFRGGRASHGSRFHRAPGSIGASATPSRVFKNKKMPGQLGNTQVTMQCLQVIRVDADDNLLLIKGAIPGHRNNIVLIKNSVKA</sequence>
<reference key="1">
    <citation type="submission" date="2006-10" db="EMBL/GenBank/DDBJ databases">
        <title>Complete sequence of chromosome of Pelobacter propionicus DSM 2379.</title>
        <authorList>
            <consortium name="US DOE Joint Genome Institute"/>
            <person name="Copeland A."/>
            <person name="Lucas S."/>
            <person name="Lapidus A."/>
            <person name="Barry K."/>
            <person name="Detter J.C."/>
            <person name="Glavina del Rio T."/>
            <person name="Hammon N."/>
            <person name="Israni S."/>
            <person name="Dalin E."/>
            <person name="Tice H."/>
            <person name="Pitluck S."/>
            <person name="Saunders E."/>
            <person name="Brettin T."/>
            <person name="Bruce D."/>
            <person name="Han C."/>
            <person name="Tapia R."/>
            <person name="Schmutz J."/>
            <person name="Larimer F."/>
            <person name="Land M."/>
            <person name="Hauser L."/>
            <person name="Kyrpides N."/>
            <person name="Kim E."/>
            <person name="Lovley D."/>
            <person name="Richardson P."/>
        </authorList>
    </citation>
    <scope>NUCLEOTIDE SEQUENCE [LARGE SCALE GENOMIC DNA]</scope>
    <source>
        <strain>DSM 2379 / NBRC 103807 / OttBd1</strain>
    </source>
</reference>
<comment type="function">
    <text evidence="1">One of the primary rRNA binding proteins, it binds directly near the 3'-end of the 23S rRNA, where it nucleates assembly of the 50S subunit.</text>
</comment>
<comment type="subunit">
    <text evidence="1">Part of the 50S ribosomal subunit. Forms a cluster with proteins L14 and L19.</text>
</comment>
<comment type="similarity">
    <text evidence="1">Belongs to the universal ribosomal protein uL3 family.</text>
</comment>
<organism>
    <name type="scientific">Pelobacter propionicus (strain DSM 2379 / NBRC 103807 / OttBd1)</name>
    <dbReference type="NCBI Taxonomy" id="338966"/>
    <lineage>
        <taxon>Bacteria</taxon>
        <taxon>Pseudomonadati</taxon>
        <taxon>Thermodesulfobacteriota</taxon>
        <taxon>Desulfuromonadia</taxon>
        <taxon>Desulfuromonadales</taxon>
        <taxon>Desulfuromonadaceae</taxon>
        <taxon>Pelobacter</taxon>
    </lineage>
</organism>
<evidence type="ECO:0000255" key="1">
    <source>
        <dbReference type="HAMAP-Rule" id="MF_01325"/>
    </source>
</evidence>
<evidence type="ECO:0000305" key="2"/>
<protein>
    <recommendedName>
        <fullName evidence="1">Large ribosomal subunit protein uL3</fullName>
    </recommendedName>
    <alternativeName>
        <fullName evidence="2">50S ribosomal protein L3</fullName>
    </alternativeName>
</protein>
<accession>A1ALU1</accession>
<proteinExistence type="inferred from homology"/>
<keyword id="KW-1185">Reference proteome</keyword>
<keyword id="KW-0687">Ribonucleoprotein</keyword>
<keyword id="KW-0689">Ribosomal protein</keyword>
<keyword id="KW-0694">RNA-binding</keyword>
<keyword id="KW-0699">rRNA-binding</keyword>
<name>RL3_PELPD</name>
<feature type="chain" id="PRO_1000052103" description="Large ribosomal subunit protein uL3">
    <location>
        <begin position="1"/>
        <end position="209"/>
    </location>
</feature>
<dbReference type="EMBL" id="CP000482">
    <property type="protein sequence ID" value="ABK98311.1"/>
    <property type="molecule type" value="Genomic_DNA"/>
</dbReference>
<dbReference type="RefSeq" id="WP_011734623.1">
    <property type="nucleotide sequence ID" value="NC_008609.1"/>
</dbReference>
<dbReference type="SMR" id="A1ALU1"/>
<dbReference type="STRING" id="338966.Ppro_0680"/>
<dbReference type="KEGG" id="ppd:Ppro_0680"/>
<dbReference type="eggNOG" id="COG0087">
    <property type="taxonomic scope" value="Bacteria"/>
</dbReference>
<dbReference type="HOGENOM" id="CLU_044142_4_1_7"/>
<dbReference type="OrthoDB" id="9806135at2"/>
<dbReference type="Proteomes" id="UP000006732">
    <property type="component" value="Chromosome"/>
</dbReference>
<dbReference type="GO" id="GO:0022625">
    <property type="term" value="C:cytosolic large ribosomal subunit"/>
    <property type="evidence" value="ECO:0007669"/>
    <property type="project" value="TreeGrafter"/>
</dbReference>
<dbReference type="GO" id="GO:0019843">
    <property type="term" value="F:rRNA binding"/>
    <property type="evidence" value="ECO:0007669"/>
    <property type="project" value="UniProtKB-UniRule"/>
</dbReference>
<dbReference type="GO" id="GO:0003735">
    <property type="term" value="F:structural constituent of ribosome"/>
    <property type="evidence" value="ECO:0007669"/>
    <property type="project" value="InterPro"/>
</dbReference>
<dbReference type="GO" id="GO:0006412">
    <property type="term" value="P:translation"/>
    <property type="evidence" value="ECO:0007669"/>
    <property type="project" value="UniProtKB-UniRule"/>
</dbReference>
<dbReference type="FunFam" id="2.40.30.10:FF:000004">
    <property type="entry name" value="50S ribosomal protein L3"/>
    <property type="match status" value="1"/>
</dbReference>
<dbReference type="FunFam" id="3.30.160.810:FF:000001">
    <property type="entry name" value="50S ribosomal protein L3"/>
    <property type="match status" value="1"/>
</dbReference>
<dbReference type="Gene3D" id="3.30.160.810">
    <property type="match status" value="1"/>
</dbReference>
<dbReference type="Gene3D" id="2.40.30.10">
    <property type="entry name" value="Translation factors"/>
    <property type="match status" value="1"/>
</dbReference>
<dbReference type="HAMAP" id="MF_01325_B">
    <property type="entry name" value="Ribosomal_uL3_B"/>
    <property type="match status" value="1"/>
</dbReference>
<dbReference type="InterPro" id="IPR000597">
    <property type="entry name" value="Ribosomal_uL3"/>
</dbReference>
<dbReference type="InterPro" id="IPR019927">
    <property type="entry name" value="Ribosomal_uL3_bac/org-type"/>
</dbReference>
<dbReference type="InterPro" id="IPR019926">
    <property type="entry name" value="Ribosomal_uL3_CS"/>
</dbReference>
<dbReference type="InterPro" id="IPR009000">
    <property type="entry name" value="Transl_B-barrel_sf"/>
</dbReference>
<dbReference type="NCBIfam" id="TIGR03625">
    <property type="entry name" value="L3_bact"/>
    <property type="match status" value="1"/>
</dbReference>
<dbReference type="PANTHER" id="PTHR11229">
    <property type="entry name" value="50S RIBOSOMAL PROTEIN L3"/>
    <property type="match status" value="1"/>
</dbReference>
<dbReference type="PANTHER" id="PTHR11229:SF16">
    <property type="entry name" value="LARGE RIBOSOMAL SUBUNIT PROTEIN UL3C"/>
    <property type="match status" value="1"/>
</dbReference>
<dbReference type="Pfam" id="PF00297">
    <property type="entry name" value="Ribosomal_L3"/>
    <property type="match status" value="1"/>
</dbReference>
<dbReference type="SUPFAM" id="SSF50447">
    <property type="entry name" value="Translation proteins"/>
    <property type="match status" value="1"/>
</dbReference>
<dbReference type="PROSITE" id="PS00474">
    <property type="entry name" value="RIBOSOMAL_L3"/>
    <property type="match status" value="1"/>
</dbReference>